<accession>Q6YI93</accession>
<accession>B7ZRV6</accession>
<protein>
    <recommendedName>
        <fullName>Histone-lysine N-methyltransferase SETDB2</fullName>
        <ecNumber evidence="2">2.1.1.366</ecNumber>
    </recommendedName>
    <alternativeName>
        <fullName>Chronic lymphocytic leukemia deletion region gene 8 protein homolog</fullName>
    </alternativeName>
    <alternativeName>
        <fullName>SET domain bifurcated 2</fullName>
    </alternativeName>
</protein>
<reference key="1">
    <citation type="submission" date="2002-08" db="EMBL/GenBank/DDBJ databases">
        <title>Molecular cloning and analysis of the expression of SET-domain putative histone methyltransferase CLLD8 in Xenopus laevis.</title>
        <authorList>
            <person name="Ruzov A."/>
            <person name="Meehan R."/>
        </authorList>
    </citation>
    <scope>NUCLEOTIDE SEQUENCE [MRNA]</scope>
</reference>
<reference key="2">
    <citation type="submission" date="2008-11" db="EMBL/GenBank/DDBJ databases">
        <authorList>
            <consortium name="NIH - Xenopus Gene Collection (XGC) project"/>
        </authorList>
    </citation>
    <scope>NUCLEOTIDE SEQUENCE [LARGE SCALE MRNA]</scope>
    <source>
        <tissue>Oocyte</tissue>
    </source>
</reference>
<proteinExistence type="evidence at transcript level"/>
<name>SETB2_XENLA</name>
<organism>
    <name type="scientific">Xenopus laevis</name>
    <name type="common">African clawed frog</name>
    <dbReference type="NCBI Taxonomy" id="8355"/>
    <lineage>
        <taxon>Eukaryota</taxon>
        <taxon>Metazoa</taxon>
        <taxon>Chordata</taxon>
        <taxon>Craniata</taxon>
        <taxon>Vertebrata</taxon>
        <taxon>Euteleostomi</taxon>
        <taxon>Amphibia</taxon>
        <taxon>Batrachia</taxon>
        <taxon>Anura</taxon>
        <taxon>Pipoidea</taxon>
        <taxon>Pipidae</taxon>
        <taxon>Xenopodinae</taxon>
        <taxon>Xenopus</taxon>
        <taxon>Xenopus</taxon>
    </lineage>
</organism>
<dbReference type="EC" id="2.1.1.366" evidence="2"/>
<dbReference type="EMBL" id="AY145835">
    <property type="protein sequence ID" value="AAN61106.1"/>
    <property type="status" value="ALT_FRAME"/>
    <property type="molecule type" value="mRNA"/>
</dbReference>
<dbReference type="EMBL" id="BC170303">
    <property type="protein sequence ID" value="AAI70303.1"/>
    <property type="molecule type" value="mRNA"/>
</dbReference>
<dbReference type="RefSeq" id="NP_001082765.1">
    <property type="nucleotide sequence ID" value="NM_001089296.1"/>
</dbReference>
<dbReference type="GeneID" id="398711"/>
<dbReference type="KEGG" id="xla:398711"/>
<dbReference type="AGR" id="Xenbase:XB-GENE-1219036"/>
<dbReference type="CTD" id="398711"/>
<dbReference type="Xenbase" id="XB-GENE-1219036">
    <property type="gene designation" value="setdb2.S"/>
</dbReference>
<dbReference type="OrthoDB" id="5792673at2759"/>
<dbReference type="Proteomes" id="UP000186698">
    <property type="component" value="Chromosome 2S"/>
</dbReference>
<dbReference type="Bgee" id="398711">
    <property type="expression patterns" value="Expressed in blastula and 18 other cell types or tissues"/>
</dbReference>
<dbReference type="GO" id="GO:0005694">
    <property type="term" value="C:chromosome"/>
    <property type="evidence" value="ECO:0007669"/>
    <property type="project" value="UniProtKB-SubCell"/>
</dbReference>
<dbReference type="GO" id="GO:0005634">
    <property type="term" value="C:nucleus"/>
    <property type="evidence" value="ECO:0000250"/>
    <property type="project" value="UniProtKB"/>
</dbReference>
<dbReference type="GO" id="GO:0003677">
    <property type="term" value="F:DNA binding"/>
    <property type="evidence" value="ECO:0007669"/>
    <property type="project" value="InterPro"/>
</dbReference>
<dbReference type="GO" id="GO:0046974">
    <property type="term" value="F:histone H3K9 methyltransferase activity"/>
    <property type="evidence" value="ECO:0000250"/>
    <property type="project" value="UniProtKB"/>
</dbReference>
<dbReference type="GO" id="GO:0140948">
    <property type="term" value="F:histone H3K9 monomethyltransferase activity"/>
    <property type="evidence" value="ECO:0007669"/>
    <property type="project" value="RHEA"/>
</dbReference>
<dbReference type="GO" id="GO:0008270">
    <property type="term" value="F:zinc ion binding"/>
    <property type="evidence" value="ECO:0007669"/>
    <property type="project" value="InterPro"/>
</dbReference>
<dbReference type="GO" id="GO:0051301">
    <property type="term" value="P:cell division"/>
    <property type="evidence" value="ECO:0007669"/>
    <property type="project" value="UniProtKB-KW"/>
</dbReference>
<dbReference type="GO" id="GO:0007059">
    <property type="term" value="P:chromosome segregation"/>
    <property type="evidence" value="ECO:0000250"/>
    <property type="project" value="UniProtKB"/>
</dbReference>
<dbReference type="GO" id="GO:0001947">
    <property type="term" value="P:heart looping"/>
    <property type="evidence" value="ECO:0000250"/>
    <property type="project" value="UniProtKB"/>
</dbReference>
<dbReference type="GO" id="GO:0070828">
    <property type="term" value="P:heterochromatin organization"/>
    <property type="evidence" value="ECO:0000318"/>
    <property type="project" value="GO_Central"/>
</dbReference>
<dbReference type="GO" id="GO:0070986">
    <property type="term" value="P:left/right axis specification"/>
    <property type="evidence" value="ECO:0000250"/>
    <property type="project" value="UniProtKB"/>
</dbReference>
<dbReference type="GO" id="GO:0032259">
    <property type="term" value="P:methylation"/>
    <property type="evidence" value="ECO:0007669"/>
    <property type="project" value="UniProtKB-KW"/>
</dbReference>
<dbReference type="GO" id="GO:0000278">
    <property type="term" value="P:mitotic cell cycle"/>
    <property type="evidence" value="ECO:0000250"/>
    <property type="project" value="UniProtKB"/>
</dbReference>
<dbReference type="GO" id="GO:0045892">
    <property type="term" value="P:negative regulation of DNA-templated transcription"/>
    <property type="evidence" value="ECO:0000250"/>
    <property type="project" value="UniProtKB"/>
</dbReference>
<dbReference type="GO" id="GO:0010629">
    <property type="term" value="P:negative regulation of gene expression"/>
    <property type="evidence" value="ECO:0000318"/>
    <property type="project" value="GO_Central"/>
</dbReference>
<dbReference type="CDD" id="cd01395">
    <property type="entry name" value="HMT_MBD"/>
    <property type="match status" value="1"/>
</dbReference>
<dbReference type="CDD" id="cd10523">
    <property type="entry name" value="SET_SETDB2"/>
    <property type="match status" value="1"/>
</dbReference>
<dbReference type="FunFam" id="2.170.270.10:FF:000029">
    <property type="entry name" value="Histone-lysine N-methyltransferase SETDB2"/>
    <property type="match status" value="1"/>
</dbReference>
<dbReference type="Gene3D" id="2.170.270.10">
    <property type="entry name" value="SET domain"/>
    <property type="match status" value="2"/>
</dbReference>
<dbReference type="InterPro" id="IPR016177">
    <property type="entry name" value="DNA-bd_dom_sf"/>
</dbReference>
<dbReference type="InterPro" id="IPR001739">
    <property type="entry name" value="Methyl_CpG_DNA-bd"/>
</dbReference>
<dbReference type="InterPro" id="IPR003616">
    <property type="entry name" value="Post-SET_dom"/>
</dbReference>
<dbReference type="InterPro" id="IPR007728">
    <property type="entry name" value="Pre-SET_dom"/>
</dbReference>
<dbReference type="InterPro" id="IPR001214">
    <property type="entry name" value="SET_dom"/>
</dbReference>
<dbReference type="InterPro" id="IPR046341">
    <property type="entry name" value="SET_dom_sf"/>
</dbReference>
<dbReference type="InterPro" id="IPR047232">
    <property type="entry name" value="SETDB1/2-like_MBD"/>
</dbReference>
<dbReference type="InterPro" id="IPR051516">
    <property type="entry name" value="SETDB_methyltransferase"/>
</dbReference>
<dbReference type="PANTHER" id="PTHR46024">
    <property type="entry name" value="HISTONE-LYSINE N-METHYLTRANSFERASE EGGLESS"/>
    <property type="match status" value="1"/>
</dbReference>
<dbReference type="PANTHER" id="PTHR46024:SF3">
    <property type="entry name" value="HISTONE-LYSINE N-METHYLTRANSFERASE SETDB2"/>
    <property type="match status" value="1"/>
</dbReference>
<dbReference type="Pfam" id="PF01429">
    <property type="entry name" value="MBD"/>
    <property type="match status" value="1"/>
</dbReference>
<dbReference type="Pfam" id="PF05033">
    <property type="entry name" value="Pre-SET"/>
    <property type="match status" value="1"/>
</dbReference>
<dbReference type="Pfam" id="PF00856">
    <property type="entry name" value="SET"/>
    <property type="match status" value="1"/>
</dbReference>
<dbReference type="SMART" id="SM00391">
    <property type="entry name" value="MBD"/>
    <property type="match status" value="1"/>
</dbReference>
<dbReference type="SMART" id="SM00468">
    <property type="entry name" value="PreSET"/>
    <property type="match status" value="1"/>
</dbReference>
<dbReference type="SMART" id="SM00317">
    <property type="entry name" value="SET"/>
    <property type="match status" value="1"/>
</dbReference>
<dbReference type="SUPFAM" id="SSF54171">
    <property type="entry name" value="DNA-binding domain"/>
    <property type="match status" value="1"/>
</dbReference>
<dbReference type="SUPFAM" id="SSF82199">
    <property type="entry name" value="SET domain"/>
    <property type="match status" value="1"/>
</dbReference>
<dbReference type="PROSITE" id="PS50868">
    <property type="entry name" value="POST_SET"/>
    <property type="match status" value="1"/>
</dbReference>
<dbReference type="PROSITE" id="PS50867">
    <property type="entry name" value="PRE_SET"/>
    <property type="match status" value="1"/>
</dbReference>
<dbReference type="PROSITE" id="PS50280">
    <property type="entry name" value="SET"/>
    <property type="match status" value="1"/>
</dbReference>
<keyword id="KW-0131">Cell cycle</keyword>
<keyword id="KW-0132">Cell division</keyword>
<keyword id="KW-0156">Chromatin regulator</keyword>
<keyword id="KW-0158">Chromosome</keyword>
<keyword id="KW-0217">Developmental protein</keyword>
<keyword id="KW-0479">Metal-binding</keyword>
<keyword id="KW-0489">Methyltransferase</keyword>
<keyword id="KW-0498">Mitosis</keyword>
<keyword id="KW-0539">Nucleus</keyword>
<keyword id="KW-1185">Reference proteome</keyword>
<keyword id="KW-0949">S-adenosyl-L-methionine</keyword>
<keyword id="KW-0808">Transferase</keyword>
<keyword id="KW-0862">Zinc</keyword>
<comment type="function">
    <text evidence="1">Histone methyltransferase involved in left-right axis specification in early development and mitosis. Specifically trimethylates 'Lys-9' of histone H3 (H3K9me3). H3K9me3 is a specific tag for epigenetic transcriptional repression that recruits HP1 (CBX1, CBX3 and/or CBX5) proteins to methylated histones. Contributes to H3K9me3 in both the interspersed repetitive elements and centromere-associated repeats. Plays a role in chromosome condensation and segregation during mitosis (By similarity).</text>
</comment>
<comment type="catalytic activity">
    <reaction evidence="2">
        <text>N(6),N(6)-dimethyl-L-lysyl(9)-[histone H3] + S-adenosyl-L-methionine = N(6),N(6),N(6)-trimethyl-L-lysyl(9)-[histone H3] + S-adenosyl-L-homocysteine + H(+)</text>
        <dbReference type="Rhea" id="RHEA:60288"/>
        <dbReference type="Rhea" id="RHEA-COMP:15538"/>
        <dbReference type="Rhea" id="RHEA-COMP:15541"/>
        <dbReference type="ChEBI" id="CHEBI:15378"/>
        <dbReference type="ChEBI" id="CHEBI:57856"/>
        <dbReference type="ChEBI" id="CHEBI:59789"/>
        <dbReference type="ChEBI" id="CHEBI:61961"/>
        <dbReference type="ChEBI" id="CHEBI:61976"/>
        <dbReference type="EC" id="2.1.1.366"/>
    </reaction>
</comment>
<comment type="subcellular location">
    <subcellularLocation>
        <location evidence="1">Nucleus</location>
    </subcellularLocation>
    <subcellularLocation>
        <location evidence="1">Chromosome</location>
    </subcellularLocation>
</comment>
<comment type="domain">
    <text evidence="1">In the pre-SET domain, Cys residues bind 3 zinc ions that are arranged in a triangular cluster; some of these Cys residues contribute to the binding of two zinc ions within the cluster.</text>
</comment>
<comment type="similarity">
    <text evidence="4">Belongs to the class V-like SAM-binding methyltransferase superfamily.</text>
</comment>
<comment type="sequence caution" evidence="6">
    <conflict type="frameshift">
        <sequence resource="EMBL-CDS" id="AAN61106"/>
    </conflict>
</comment>
<gene>
    <name type="primary">setdb2</name>
    <name type="synonym">clld8</name>
</gene>
<feature type="chain" id="PRO_0000281825" description="Histone-lysine N-methyltransferase SETDB2">
    <location>
        <begin position="1"/>
        <end position="703"/>
    </location>
</feature>
<feature type="domain" description="MBD">
    <location>
        <begin position="178"/>
        <end position="248"/>
    </location>
</feature>
<feature type="domain" description="Pre-SET" evidence="3">
    <location>
        <begin position="310"/>
        <end position="384"/>
    </location>
</feature>
<feature type="domain" description="SET" evidence="4">
    <location>
        <begin position="387"/>
        <end position="678"/>
    </location>
</feature>
<feature type="region of interest" description="Disordered" evidence="5">
    <location>
        <begin position="492"/>
        <end position="588"/>
    </location>
</feature>
<feature type="compositionally biased region" description="Basic residues" evidence="5">
    <location>
        <begin position="511"/>
        <end position="525"/>
    </location>
</feature>
<feature type="compositionally biased region" description="Polar residues" evidence="5">
    <location>
        <begin position="550"/>
        <end position="560"/>
    </location>
</feature>
<feature type="compositionally biased region" description="Low complexity" evidence="5">
    <location>
        <begin position="571"/>
        <end position="586"/>
    </location>
</feature>
<feature type="binding site" evidence="1">
    <location>
        <position position="312"/>
    </location>
    <ligand>
        <name>Zn(2+)</name>
        <dbReference type="ChEBI" id="CHEBI:29105"/>
        <label>1</label>
    </ligand>
</feature>
<feature type="binding site" evidence="1">
    <location>
        <position position="312"/>
    </location>
    <ligand>
        <name>Zn(2+)</name>
        <dbReference type="ChEBI" id="CHEBI:29105"/>
        <label>2</label>
    </ligand>
</feature>
<feature type="binding site" evidence="1">
    <location>
        <position position="314"/>
    </location>
    <ligand>
        <name>Zn(2+)</name>
        <dbReference type="ChEBI" id="CHEBI:29105"/>
        <label>1</label>
    </ligand>
</feature>
<feature type="binding site" evidence="1">
    <location>
        <position position="318"/>
    </location>
    <ligand>
        <name>Zn(2+)</name>
        <dbReference type="ChEBI" id="CHEBI:29105"/>
        <label>1</label>
    </ligand>
</feature>
<feature type="binding site" evidence="1">
    <location>
        <position position="318"/>
    </location>
    <ligand>
        <name>Zn(2+)</name>
        <dbReference type="ChEBI" id="CHEBI:29105"/>
        <label>3</label>
    </ligand>
</feature>
<feature type="binding site" evidence="1">
    <location>
        <position position="324"/>
    </location>
    <ligand>
        <name>Zn(2+)</name>
        <dbReference type="ChEBI" id="CHEBI:29105"/>
        <label>1</label>
    </ligand>
</feature>
<feature type="binding site" evidence="1">
    <location>
        <position position="326"/>
    </location>
    <ligand>
        <name>Zn(2+)</name>
        <dbReference type="ChEBI" id="CHEBI:29105"/>
        <label>2</label>
    </ligand>
</feature>
<feature type="binding site" evidence="1">
    <location>
        <position position="365"/>
    </location>
    <ligand>
        <name>Zn(2+)</name>
        <dbReference type="ChEBI" id="CHEBI:29105"/>
        <label>2</label>
    </ligand>
</feature>
<feature type="binding site" evidence="1">
    <location>
        <position position="365"/>
    </location>
    <ligand>
        <name>Zn(2+)</name>
        <dbReference type="ChEBI" id="CHEBI:29105"/>
        <label>3</label>
    </ligand>
</feature>
<feature type="binding site" evidence="1">
    <location>
        <position position="369"/>
    </location>
    <ligand>
        <name>Zn(2+)</name>
        <dbReference type="ChEBI" id="CHEBI:29105"/>
        <label>2</label>
    </ligand>
</feature>
<feature type="binding site" evidence="1">
    <location>
        <position position="371"/>
    </location>
    <ligand>
        <name>Zn(2+)</name>
        <dbReference type="ChEBI" id="CHEBI:29105"/>
        <label>3</label>
    </ligand>
</feature>
<feature type="binding site" evidence="1">
    <location>
        <position position="376"/>
    </location>
    <ligand>
        <name>Zn(2+)</name>
        <dbReference type="ChEBI" id="CHEBI:29105"/>
        <label>3</label>
    </ligand>
</feature>
<feature type="binding site" evidence="1">
    <location>
        <begin position="397"/>
        <end position="399"/>
    </location>
    <ligand>
        <name>S-adenosyl-L-methionine</name>
        <dbReference type="ChEBI" id="CHEBI:59789"/>
    </ligand>
</feature>
<feature type="binding site" evidence="4">
    <location>
        <position position="632"/>
    </location>
    <ligand>
        <name>S-adenosyl-L-methionine</name>
        <dbReference type="ChEBI" id="CHEBI:59789"/>
    </ligand>
</feature>
<feature type="binding site" evidence="1">
    <location>
        <begin position="635"/>
        <end position="636"/>
    </location>
    <ligand>
        <name>S-adenosyl-L-methionine</name>
        <dbReference type="ChEBI" id="CHEBI:59789"/>
    </ligand>
</feature>
<feature type="binding site" evidence="1">
    <location>
        <position position="638"/>
    </location>
    <ligand>
        <name>Zn(2+)</name>
        <dbReference type="ChEBI" id="CHEBI:29105"/>
        <label>4</label>
    </ligand>
</feature>
<feature type="binding site" evidence="1">
    <location>
        <position position="691"/>
    </location>
    <ligand>
        <name>Zn(2+)</name>
        <dbReference type="ChEBI" id="CHEBI:29105"/>
        <label>4</label>
    </ligand>
</feature>
<feature type="binding site" evidence="1">
    <location>
        <position position="693"/>
    </location>
    <ligand>
        <name>Zn(2+)</name>
        <dbReference type="ChEBI" id="CHEBI:29105"/>
        <label>4</label>
    </ligand>
</feature>
<feature type="binding site" evidence="1">
    <location>
        <position position="698"/>
    </location>
    <ligand>
        <name>Zn(2+)</name>
        <dbReference type="ChEBI" id="CHEBI:29105"/>
        <label>4</label>
    </ligand>
</feature>
<feature type="sequence conflict" description="In Ref. 1; AAN61106." evidence="6" ref="1">
    <original>K</original>
    <variation>Q</variation>
    <location>
        <position position="97"/>
    </location>
</feature>
<feature type="sequence conflict" description="In Ref. 1; AAN61106." evidence="6" ref="1">
    <original>S</original>
    <variation>P</variation>
    <location>
        <position position="175"/>
    </location>
</feature>
<sequence>MEQSANARQSTLRSRTQELNTLSVLSKDVSLEDAKKYWKDRQADGKVDWIFEKVLNKLKILWQKIKDGSATNLEYVRAVILVNEAGNLEEDLEEDLKEDTDTIHIDIHKENEVQENTDCSPERKEDTCLNLNTDCGTDVSGSEPECNSTVSPPAAERVYFGNHSCGPSCLSGINSFLFTKGNPLQLPISCDFQRCHLKINSPDDLSHILYKAPCGRSLRDYDEVHSYLTETGCHFLAVDNFSFNNHVRLDSNSSFNQGIVQDCDISNDVESVPVAFSNEIDNTRPSNFIYRKTSWPPGYSLNNFTDIFVKCCNCTDGCLDILTCSCLQLTAQAFTKCMESSLGIGPLGYKHKRLQEPIPTGLYECNVSCKCDRMLCQNRVVQHGLKLRLQVFKTNTKGWGVRCLDDVDKGTFVCIYAGRILIRTADCTVKSTPDDSVACGNEDHEDSTSTCALILSKRKRKTSHSDSEVTVMHTNPYSMRSHGLSVHRLSNTFSPRQARSGEREFSLQPLRRPKTKTSMLQKRRRQLIEEGACTVQNSSEEEGPTPPQSPEQKSSAGTKIQRNENSDETASGYVSEESSSSVISGGHPLEKPISKFKSKLNKTTVYLSTSPEQTCEENLHFLDASKEGNVGRFLNHSCCPNLFVQQVFVDTHQKCFPWVAFFTNSVVKAGTELTWDYSYDIGTAADQEIQCLCGQKTCKNKVV</sequence>
<evidence type="ECO:0000250" key="1"/>
<evidence type="ECO:0000250" key="2">
    <source>
        <dbReference type="UniProtKB" id="Q96T68"/>
    </source>
</evidence>
<evidence type="ECO:0000255" key="3">
    <source>
        <dbReference type="PROSITE-ProRule" id="PRU00157"/>
    </source>
</evidence>
<evidence type="ECO:0000255" key="4">
    <source>
        <dbReference type="PROSITE-ProRule" id="PRU00190"/>
    </source>
</evidence>
<evidence type="ECO:0000256" key="5">
    <source>
        <dbReference type="SAM" id="MobiDB-lite"/>
    </source>
</evidence>
<evidence type="ECO:0000305" key="6"/>